<evidence type="ECO:0000255" key="1">
    <source>
        <dbReference type="HAMAP-Rule" id="MF_01037"/>
    </source>
</evidence>
<evidence type="ECO:0000305" key="2"/>
<keyword id="KW-0963">Cytoplasm</keyword>
<keyword id="KW-0274">FAD</keyword>
<keyword id="KW-0285">Flavoprotein</keyword>
<keyword id="KW-0489">Methyltransferase</keyword>
<keyword id="KW-0520">NAD</keyword>
<keyword id="KW-0521">NADP</keyword>
<keyword id="KW-0808">Transferase</keyword>
<keyword id="KW-0819">tRNA processing</keyword>
<proteinExistence type="inferred from homology"/>
<comment type="function">
    <text evidence="1">Catalyzes the folate-dependent formation of 5-methyl-uridine at position 54 (M-5-U54) in all tRNAs.</text>
</comment>
<comment type="catalytic activity">
    <reaction evidence="1">
        <text>uridine(54) in tRNA + (6R)-5,10-methylene-5,6,7,8-tetrahydrofolate + NADH + H(+) = 5-methyluridine(54) in tRNA + (6S)-5,6,7,8-tetrahydrofolate + NAD(+)</text>
        <dbReference type="Rhea" id="RHEA:16873"/>
        <dbReference type="Rhea" id="RHEA-COMP:10167"/>
        <dbReference type="Rhea" id="RHEA-COMP:10193"/>
        <dbReference type="ChEBI" id="CHEBI:15378"/>
        <dbReference type="ChEBI" id="CHEBI:15636"/>
        <dbReference type="ChEBI" id="CHEBI:57453"/>
        <dbReference type="ChEBI" id="CHEBI:57540"/>
        <dbReference type="ChEBI" id="CHEBI:57945"/>
        <dbReference type="ChEBI" id="CHEBI:65315"/>
        <dbReference type="ChEBI" id="CHEBI:74447"/>
        <dbReference type="EC" id="2.1.1.74"/>
    </reaction>
</comment>
<comment type="catalytic activity">
    <reaction evidence="1">
        <text>uridine(54) in tRNA + (6R)-5,10-methylene-5,6,7,8-tetrahydrofolate + NADPH + H(+) = 5-methyluridine(54) in tRNA + (6S)-5,6,7,8-tetrahydrofolate + NADP(+)</text>
        <dbReference type="Rhea" id="RHEA:62372"/>
        <dbReference type="Rhea" id="RHEA-COMP:10167"/>
        <dbReference type="Rhea" id="RHEA-COMP:10193"/>
        <dbReference type="ChEBI" id="CHEBI:15378"/>
        <dbReference type="ChEBI" id="CHEBI:15636"/>
        <dbReference type="ChEBI" id="CHEBI:57453"/>
        <dbReference type="ChEBI" id="CHEBI:57783"/>
        <dbReference type="ChEBI" id="CHEBI:58349"/>
        <dbReference type="ChEBI" id="CHEBI:65315"/>
        <dbReference type="ChEBI" id="CHEBI:74447"/>
        <dbReference type="EC" id="2.1.1.74"/>
    </reaction>
</comment>
<comment type="cofactor">
    <cofactor evidence="1">
        <name>FAD</name>
        <dbReference type="ChEBI" id="CHEBI:57692"/>
    </cofactor>
</comment>
<comment type="subcellular location">
    <subcellularLocation>
        <location evidence="1">Cytoplasm</location>
    </subcellularLocation>
</comment>
<comment type="similarity">
    <text evidence="1">Belongs to the MnmG family. TrmFO subfamily.</text>
</comment>
<comment type="sequence caution" evidence="2">
    <conflict type="erroneous initiation">
        <sequence resource="EMBL-CDS" id="AAT87017"/>
    </conflict>
</comment>
<feature type="chain" id="PRO_0000117277" description="Methylenetetrahydrofolate--tRNA-(uracil-5-)-methyltransferase TrmFO">
    <location>
        <begin position="1"/>
        <end position="448"/>
    </location>
</feature>
<feature type="binding site" evidence="1">
    <location>
        <begin position="13"/>
        <end position="18"/>
    </location>
    <ligand>
        <name>FAD</name>
        <dbReference type="ChEBI" id="CHEBI:57692"/>
    </ligand>
</feature>
<dbReference type="EC" id="2.1.1.74" evidence="1"/>
<dbReference type="EMBL" id="CP000003">
    <property type="protein sequence ID" value="AAT87017.1"/>
    <property type="status" value="ALT_INIT"/>
    <property type="molecule type" value="Genomic_DNA"/>
</dbReference>
<dbReference type="RefSeq" id="WP_021340038.1">
    <property type="nucleotide sequence ID" value="NC_006086.1"/>
</dbReference>
<dbReference type="SMR" id="Q5XC46"/>
<dbReference type="KEGG" id="spa:M6_Spy0882"/>
<dbReference type="HOGENOM" id="CLU_033057_1_0_9"/>
<dbReference type="Proteomes" id="UP000001167">
    <property type="component" value="Chromosome"/>
</dbReference>
<dbReference type="GO" id="GO:0005829">
    <property type="term" value="C:cytosol"/>
    <property type="evidence" value="ECO:0007669"/>
    <property type="project" value="TreeGrafter"/>
</dbReference>
<dbReference type="GO" id="GO:0050660">
    <property type="term" value="F:flavin adenine dinucleotide binding"/>
    <property type="evidence" value="ECO:0007669"/>
    <property type="project" value="UniProtKB-UniRule"/>
</dbReference>
<dbReference type="GO" id="GO:0047151">
    <property type="term" value="F:tRNA (uracil(54)-C5)-methyltransferase activity, 5,10-methylenetetrahydrofolate-dependent"/>
    <property type="evidence" value="ECO:0007669"/>
    <property type="project" value="UniProtKB-UniRule"/>
</dbReference>
<dbReference type="GO" id="GO:0030488">
    <property type="term" value="P:tRNA methylation"/>
    <property type="evidence" value="ECO:0007669"/>
    <property type="project" value="TreeGrafter"/>
</dbReference>
<dbReference type="GO" id="GO:0002098">
    <property type="term" value="P:tRNA wobble uridine modification"/>
    <property type="evidence" value="ECO:0007669"/>
    <property type="project" value="TreeGrafter"/>
</dbReference>
<dbReference type="FunFam" id="3.50.50.60:FF:000035">
    <property type="entry name" value="Methylenetetrahydrofolate--tRNA-(uracil-5-)-methyltransferase TrmFO"/>
    <property type="match status" value="1"/>
</dbReference>
<dbReference type="FunFam" id="3.50.50.60:FF:000040">
    <property type="entry name" value="Methylenetetrahydrofolate--tRNA-(uracil-5-)-methyltransferase TrmFO"/>
    <property type="match status" value="1"/>
</dbReference>
<dbReference type="Gene3D" id="3.50.50.60">
    <property type="entry name" value="FAD/NAD(P)-binding domain"/>
    <property type="match status" value="2"/>
</dbReference>
<dbReference type="HAMAP" id="MF_01037">
    <property type="entry name" value="TrmFO"/>
    <property type="match status" value="1"/>
</dbReference>
<dbReference type="InterPro" id="IPR036188">
    <property type="entry name" value="FAD/NAD-bd_sf"/>
</dbReference>
<dbReference type="InterPro" id="IPR002218">
    <property type="entry name" value="MnmG-rel"/>
</dbReference>
<dbReference type="InterPro" id="IPR020595">
    <property type="entry name" value="MnmG-rel_CS"/>
</dbReference>
<dbReference type="InterPro" id="IPR040131">
    <property type="entry name" value="MnmG_N"/>
</dbReference>
<dbReference type="InterPro" id="IPR004417">
    <property type="entry name" value="TrmFO"/>
</dbReference>
<dbReference type="NCBIfam" id="TIGR00137">
    <property type="entry name" value="gid_trmFO"/>
    <property type="match status" value="1"/>
</dbReference>
<dbReference type="NCBIfam" id="NF003739">
    <property type="entry name" value="PRK05335.1"/>
    <property type="match status" value="1"/>
</dbReference>
<dbReference type="PANTHER" id="PTHR11806">
    <property type="entry name" value="GLUCOSE INHIBITED DIVISION PROTEIN A"/>
    <property type="match status" value="1"/>
</dbReference>
<dbReference type="PANTHER" id="PTHR11806:SF2">
    <property type="entry name" value="METHYLENETETRAHYDROFOLATE--TRNA-(URACIL-5-)-METHYLTRANSFERASE TRMFO"/>
    <property type="match status" value="1"/>
</dbReference>
<dbReference type="Pfam" id="PF01134">
    <property type="entry name" value="GIDA"/>
    <property type="match status" value="1"/>
</dbReference>
<dbReference type="SUPFAM" id="SSF51905">
    <property type="entry name" value="FAD/NAD(P)-binding domain"/>
    <property type="match status" value="1"/>
</dbReference>
<dbReference type="PROSITE" id="PS01281">
    <property type="entry name" value="GIDA_2"/>
    <property type="match status" value="1"/>
</dbReference>
<name>TRMFO_STRP6</name>
<organism>
    <name type="scientific">Streptococcus pyogenes serotype M6 (strain ATCC BAA-946 / MGAS10394)</name>
    <dbReference type="NCBI Taxonomy" id="286636"/>
    <lineage>
        <taxon>Bacteria</taxon>
        <taxon>Bacillati</taxon>
        <taxon>Bacillota</taxon>
        <taxon>Bacilli</taxon>
        <taxon>Lactobacillales</taxon>
        <taxon>Streptococcaceae</taxon>
        <taxon>Streptococcus</taxon>
    </lineage>
</organism>
<sequence length="448" mass="49452">MSQSTATYINVIGAGLAGSEAAYQIAKRGIPVKLYEMRGVKATPQHKTTNFAELVCSNSFRGDSLTNAVGLLKEEMRRLDSIIMRNGEANRVPAGGAMAVDREGYAESVTAELENHPLIEVIRDEITEIPDDAITVIATGPLTSDALAEKIHALNGGDGFYFYDAAAPIIDKSTIDMSKVYLKSRYDKGEAAYLNCPMTKEEFMAFHEALTTAEEAPLNAFEKEKYFEGCMPIEVMAKRGIKTMLYGPMKPVGLEYPDDYTGPRDGEFKTPYAVVQLRQDNAAGSLYNIVGFQTHLKWGEQKRVFQTIPGLENAEFVRYGVMHRNSYMDSPNLLTETFQSRSNPNLFFAGQMTGVEGYVESAASGLVAGINAARLFKREEALIFPQTTAIGSLPHYVTHADSKHFQPMNVNFGIIKELEGPRIRDKKERYEAIASRALADLDTCLASL</sequence>
<protein>
    <recommendedName>
        <fullName evidence="1">Methylenetetrahydrofolate--tRNA-(uracil-5-)-methyltransferase TrmFO</fullName>
        <ecNumber evidence="1">2.1.1.74</ecNumber>
    </recommendedName>
    <alternativeName>
        <fullName evidence="1">Folate-dependent tRNA (uracil-5-)-methyltransferase</fullName>
    </alternativeName>
    <alternativeName>
        <fullName evidence="1">Folate-dependent tRNA(M-5-U54)-methyltransferase</fullName>
    </alternativeName>
</protein>
<accession>Q5XC46</accession>
<gene>
    <name evidence="1" type="primary">trmFO</name>
    <name type="synonym">gid</name>
    <name type="ordered locus">M6_Spy0882</name>
</gene>
<reference key="1">
    <citation type="journal article" date="2004" name="J. Infect. Dis.">
        <title>Progress toward characterization of the group A Streptococcus metagenome: complete genome sequence of a macrolide-resistant serotype M6 strain.</title>
        <authorList>
            <person name="Banks D.J."/>
            <person name="Porcella S.F."/>
            <person name="Barbian K.D."/>
            <person name="Beres S.B."/>
            <person name="Philips L.E."/>
            <person name="Voyich J.M."/>
            <person name="DeLeo F.R."/>
            <person name="Martin J.M."/>
            <person name="Somerville G.A."/>
            <person name="Musser J.M."/>
        </authorList>
    </citation>
    <scope>NUCLEOTIDE SEQUENCE [LARGE SCALE GENOMIC DNA]</scope>
    <source>
        <strain>ATCC BAA-946 / MGAS10394</strain>
    </source>
</reference>